<proteinExistence type="inferred from homology"/>
<comment type="function">
    <text evidence="1">Involved in the biosynthesis of the chorismate, which leads to the biosynthesis of aromatic amino acids. Catalyzes the reversible NADPH linked reduction of 3-dehydroshikimate (DHSA) to yield shikimate (SA).</text>
</comment>
<comment type="catalytic activity">
    <reaction evidence="1">
        <text>shikimate + NADP(+) = 3-dehydroshikimate + NADPH + H(+)</text>
        <dbReference type="Rhea" id="RHEA:17737"/>
        <dbReference type="ChEBI" id="CHEBI:15378"/>
        <dbReference type="ChEBI" id="CHEBI:16630"/>
        <dbReference type="ChEBI" id="CHEBI:36208"/>
        <dbReference type="ChEBI" id="CHEBI:57783"/>
        <dbReference type="ChEBI" id="CHEBI:58349"/>
        <dbReference type="EC" id="1.1.1.25"/>
    </reaction>
</comment>
<comment type="pathway">
    <text evidence="1">Metabolic intermediate biosynthesis; chorismate biosynthesis; chorismate from D-erythrose 4-phosphate and phosphoenolpyruvate: step 4/7.</text>
</comment>
<comment type="subunit">
    <text evidence="1">Homodimer.</text>
</comment>
<comment type="similarity">
    <text evidence="1">Belongs to the shikimate dehydrogenase family.</text>
</comment>
<keyword id="KW-0028">Amino-acid biosynthesis</keyword>
<keyword id="KW-0057">Aromatic amino acid biosynthesis</keyword>
<keyword id="KW-0521">NADP</keyword>
<keyword id="KW-0560">Oxidoreductase</keyword>
<keyword id="KW-1185">Reference proteome</keyword>
<name>AROE_EXIS2</name>
<sequence length="261" mass="28094">MQFAVIGHPIAHSLSPMLHETWLKAAGLFGCYTTLDVEGDGLEAFVQKVRKRQFDGINVTIPHKSAIIPFLDRLEPAAARAGAVNTVYWDGEELVGANTDGTGFARALATWTNAKNSLVIGAGGAARGIIPMLPGHVTVMNRTNQTAEQVAAEFGQSAVPWSRTLDLTPYDVIINTTSVGMAPAIDQTPIELTATTALICDIIYRPTPTRLLREATANGLDTLDGVLMFVLQAAEAFERFTGHKPDIALGEQVIRKQLEES</sequence>
<organism>
    <name type="scientific">Exiguobacterium sibiricum (strain DSM 17290 / CCUG 55495 / CIP 109462 / JCM 13490 / 255-15)</name>
    <dbReference type="NCBI Taxonomy" id="262543"/>
    <lineage>
        <taxon>Bacteria</taxon>
        <taxon>Bacillati</taxon>
        <taxon>Bacillota</taxon>
        <taxon>Bacilli</taxon>
        <taxon>Bacillales</taxon>
        <taxon>Bacillales Family XII. Incertae Sedis</taxon>
        <taxon>Exiguobacterium</taxon>
    </lineage>
</organism>
<gene>
    <name evidence="1" type="primary">aroE</name>
    <name type="ordered locus">Exig_0765</name>
</gene>
<dbReference type="EC" id="1.1.1.25" evidence="1"/>
<dbReference type="EMBL" id="CP001022">
    <property type="protein sequence ID" value="ACB60246.1"/>
    <property type="molecule type" value="Genomic_DNA"/>
</dbReference>
<dbReference type="RefSeq" id="WP_012369670.1">
    <property type="nucleotide sequence ID" value="NC_010556.1"/>
</dbReference>
<dbReference type="SMR" id="B1YKR3"/>
<dbReference type="STRING" id="262543.Exig_0765"/>
<dbReference type="KEGG" id="esi:Exig_0765"/>
<dbReference type="eggNOG" id="COG0169">
    <property type="taxonomic scope" value="Bacteria"/>
</dbReference>
<dbReference type="HOGENOM" id="CLU_044063_0_1_9"/>
<dbReference type="OrthoDB" id="9792692at2"/>
<dbReference type="UniPathway" id="UPA00053">
    <property type="reaction ID" value="UER00087"/>
</dbReference>
<dbReference type="Proteomes" id="UP000001681">
    <property type="component" value="Chromosome"/>
</dbReference>
<dbReference type="GO" id="GO:0005829">
    <property type="term" value="C:cytosol"/>
    <property type="evidence" value="ECO:0007669"/>
    <property type="project" value="TreeGrafter"/>
</dbReference>
<dbReference type="GO" id="GO:0050661">
    <property type="term" value="F:NADP binding"/>
    <property type="evidence" value="ECO:0007669"/>
    <property type="project" value="InterPro"/>
</dbReference>
<dbReference type="GO" id="GO:0004764">
    <property type="term" value="F:shikimate 3-dehydrogenase (NADP+) activity"/>
    <property type="evidence" value="ECO:0007669"/>
    <property type="project" value="UniProtKB-UniRule"/>
</dbReference>
<dbReference type="GO" id="GO:0008652">
    <property type="term" value="P:amino acid biosynthetic process"/>
    <property type="evidence" value="ECO:0007669"/>
    <property type="project" value="UniProtKB-KW"/>
</dbReference>
<dbReference type="GO" id="GO:0009073">
    <property type="term" value="P:aromatic amino acid family biosynthetic process"/>
    <property type="evidence" value="ECO:0007669"/>
    <property type="project" value="UniProtKB-KW"/>
</dbReference>
<dbReference type="GO" id="GO:0009423">
    <property type="term" value="P:chorismate biosynthetic process"/>
    <property type="evidence" value="ECO:0007669"/>
    <property type="project" value="UniProtKB-UniRule"/>
</dbReference>
<dbReference type="GO" id="GO:0019632">
    <property type="term" value="P:shikimate metabolic process"/>
    <property type="evidence" value="ECO:0007669"/>
    <property type="project" value="InterPro"/>
</dbReference>
<dbReference type="CDD" id="cd01065">
    <property type="entry name" value="NAD_bind_Shikimate_DH"/>
    <property type="match status" value="1"/>
</dbReference>
<dbReference type="Gene3D" id="3.40.50.10860">
    <property type="entry name" value="Leucine Dehydrogenase, chain A, domain 1"/>
    <property type="match status" value="1"/>
</dbReference>
<dbReference type="Gene3D" id="3.40.50.720">
    <property type="entry name" value="NAD(P)-binding Rossmann-like Domain"/>
    <property type="match status" value="1"/>
</dbReference>
<dbReference type="HAMAP" id="MF_00222">
    <property type="entry name" value="Shikimate_DH_AroE"/>
    <property type="match status" value="1"/>
</dbReference>
<dbReference type="InterPro" id="IPR046346">
    <property type="entry name" value="Aminoacid_DH-like_N_sf"/>
</dbReference>
<dbReference type="InterPro" id="IPR036291">
    <property type="entry name" value="NAD(P)-bd_dom_sf"/>
</dbReference>
<dbReference type="InterPro" id="IPR041121">
    <property type="entry name" value="SDH_C"/>
</dbReference>
<dbReference type="InterPro" id="IPR011342">
    <property type="entry name" value="Shikimate_DH"/>
</dbReference>
<dbReference type="InterPro" id="IPR013708">
    <property type="entry name" value="Shikimate_DH-bd_N"/>
</dbReference>
<dbReference type="InterPro" id="IPR022893">
    <property type="entry name" value="Shikimate_DH_fam"/>
</dbReference>
<dbReference type="InterPro" id="IPR006151">
    <property type="entry name" value="Shikm_DH/Glu-tRNA_Rdtase"/>
</dbReference>
<dbReference type="NCBIfam" id="TIGR00507">
    <property type="entry name" value="aroE"/>
    <property type="match status" value="1"/>
</dbReference>
<dbReference type="PANTHER" id="PTHR21089:SF1">
    <property type="entry name" value="BIFUNCTIONAL 3-DEHYDROQUINATE DEHYDRATASE_SHIKIMATE DEHYDROGENASE, CHLOROPLASTIC"/>
    <property type="match status" value="1"/>
</dbReference>
<dbReference type="PANTHER" id="PTHR21089">
    <property type="entry name" value="SHIKIMATE DEHYDROGENASE"/>
    <property type="match status" value="1"/>
</dbReference>
<dbReference type="Pfam" id="PF18317">
    <property type="entry name" value="SDH_C"/>
    <property type="match status" value="1"/>
</dbReference>
<dbReference type="Pfam" id="PF01488">
    <property type="entry name" value="Shikimate_DH"/>
    <property type="match status" value="1"/>
</dbReference>
<dbReference type="Pfam" id="PF08501">
    <property type="entry name" value="Shikimate_dh_N"/>
    <property type="match status" value="1"/>
</dbReference>
<dbReference type="SUPFAM" id="SSF53223">
    <property type="entry name" value="Aminoacid dehydrogenase-like, N-terminal domain"/>
    <property type="match status" value="1"/>
</dbReference>
<dbReference type="SUPFAM" id="SSF51735">
    <property type="entry name" value="NAD(P)-binding Rossmann-fold domains"/>
    <property type="match status" value="1"/>
</dbReference>
<feature type="chain" id="PRO_1000204263" description="Shikimate dehydrogenase (NADP(+))">
    <location>
        <begin position="1"/>
        <end position="261"/>
    </location>
</feature>
<feature type="active site" description="Proton acceptor" evidence="1">
    <location>
        <position position="64"/>
    </location>
</feature>
<feature type="binding site" evidence="1">
    <location>
        <begin position="13"/>
        <end position="15"/>
    </location>
    <ligand>
        <name>shikimate</name>
        <dbReference type="ChEBI" id="CHEBI:36208"/>
    </ligand>
</feature>
<feature type="binding site" evidence="1">
    <location>
        <position position="60"/>
    </location>
    <ligand>
        <name>shikimate</name>
        <dbReference type="ChEBI" id="CHEBI:36208"/>
    </ligand>
</feature>
<feature type="binding site" evidence="1">
    <location>
        <position position="85"/>
    </location>
    <ligand>
        <name>shikimate</name>
        <dbReference type="ChEBI" id="CHEBI:36208"/>
    </ligand>
</feature>
<feature type="binding site" evidence="1">
    <location>
        <position position="100"/>
    </location>
    <ligand>
        <name>shikimate</name>
        <dbReference type="ChEBI" id="CHEBI:36208"/>
    </ligand>
</feature>
<feature type="binding site" evidence="1">
    <location>
        <begin position="121"/>
        <end position="125"/>
    </location>
    <ligand>
        <name>NADP(+)</name>
        <dbReference type="ChEBI" id="CHEBI:58349"/>
    </ligand>
</feature>
<feature type="binding site" evidence="1">
    <location>
        <position position="202"/>
    </location>
    <ligand>
        <name>NADP(+)</name>
        <dbReference type="ChEBI" id="CHEBI:58349"/>
    </ligand>
</feature>
<feature type="binding site" evidence="1">
    <location>
        <position position="204"/>
    </location>
    <ligand>
        <name>shikimate</name>
        <dbReference type="ChEBI" id="CHEBI:36208"/>
    </ligand>
</feature>
<feature type="binding site" evidence="1">
    <location>
        <position position="225"/>
    </location>
    <ligand>
        <name>NADP(+)</name>
        <dbReference type="ChEBI" id="CHEBI:58349"/>
    </ligand>
</feature>
<reference key="1">
    <citation type="submission" date="2008-04" db="EMBL/GenBank/DDBJ databases">
        <title>Complete sequence of chromosome of Exiguobacterium sibiricum 255-15.</title>
        <authorList>
            <consortium name="US DOE Joint Genome Institute"/>
            <person name="Copeland A."/>
            <person name="Lucas S."/>
            <person name="Lapidus A."/>
            <person name="Glavina del Rio T."/>
            <person name="Dalin E."/>
            <person name="Tice H."/>
            <person name="Bruce D."/>
            <person name="Goodwin L."/>
            <person name="Pitluck S."/>
            <person name="Kiss H."/>
            <person name="Chertkov O."/>
            <person name="Monk C."/>
            <person name="Brettin T."/>
            <person name="Detter J.C."/>
            <person name="Han C."/>
            <person name="Kuske C.R."/>
            <person name="Schmutz J."/>
            <person name="Larimer F."/>
            <person name="Land M."/>
            <person name="Hauser L."/>
            <person name="Kyrpides N."/>
            <person name="Mikhailova N."/>
            <person name="Vishnivetskaya T."/>
            <person name="Rodrigues D.F."/>
            <person name="Gilichinsky D."/>
            <person name="Tiedje J."/>
            <person name="Richardson P."/>
        </authorList>
    </citation>
    <scope>NUCLEOTIDE SEQUENCE [LARGE SCALE GENOMIC DNA]</scope>
    <source>
        <strain>DSM 17290 / CCUG 55495 / CIP 109462 / JCM 13490 / 255-15</strain>
    </source>
</reference>
<protein>
    <recommendedName>
        <fullName evidence="1">Shikimate dehydrogenase (NADP(+))</fullName>
        <shortName evidence="1">SDH</shortName>
        <ecNumber evidence="1">1.1.1.25</ecNumber>
    </recommendedName>
</protein>
<accession>B1YKR3</accession>
<evidence type="ECO:0000255" key="1">
    <source>
        <dbReference type="HAMAP-Rule" id="MF_00222"/>
    </source>
</evidence>